<feature type="chain" id="PRO_0000142388" description="Protein SSO0193">
    <location>
        <begin position="1"/>
        <end position="227"/>
    </location>
</feature>
<feature type="domain" description="AMMECR1" evidence="1">
    <location>
        <begin position="15"/>
        <end position="209"/>
    </location>
</feature>
<protein>
    <recommendedName>
        <fullName evidence="1">Protein SSO0193</fullName>
    </recommendedName>
</protein>
<dbReference type="EMBL" id="AE006641">
    <property type="protein sequence ID" value="AAK40539.1"/>
    <property type="molecule type" value="Genomic_DNA"/>
</dbReference>
<dbReference type="PIR" id="D90160">
    <property type="entry name" value="D90160"/>
</dbReference>
<dbReference type="SMR" id="Q980T4"/>
<dbReference type="FunCoup" id="Q980T4">
    <property type="interactions" value="34"/>
</dbReference>
<dbReference type="STRING" id="273057.SSO0193"/>
<dbReference type="PaxDb" id="273057-SSO0193"/>
<dbReference type="EnsemblBacteria" id="AAK40539">
    <property type="protein sequence ID" value="AAK40539"/>
    <property type="gene ID" value="SSO0193"/>
</dbReference>
<dbReference type="KEGG" id="sso:SSO0193"/>
<dbReference type="PATRIC" id="fig|273057.12.peg.192"/>
<dbReference type="eggNOG" id="arCOG01336">
    <property type="taxonomic scope" value="Archaea"/>
</dbReference>
<dbReference type="HOGENOM" id="CLU_095686_1_1_2"/>
<dbReference type="InParanoid" id="Q980T4"/>
<dbReference type="PhylomeDB" id="Q980T4"/>
<dbReference type="Proteomes" id="UP000001974">
    <property type="component" value="Chromosome"/>
</dbReference>
<dbReference type="Gene3D" id="3.30.700.20">
    <property type="entry name" value="Hypothetical protein ph0010, domain 1"/>
    <property type="match status" value="1"/>
</dbReference>
<dbReference type="Gene3D" id="3.30.1490.150">
    <property type="entry name" value="Hypothetical protein ph0010, domain 2"/>
    <property type="match status" value="1"/>
</dbReference>
<dbReference type="HAMAP" id="MF_00645">
    <property type="entry name" value="AMMECR1"/>
    <property type="match status" value="1"/>
</dbReference>
<dbReference type="InterPro" id="IPR023473">
    <property type="entry name" value="AMMECR1"/>
</dbReference>
<dbReference type="InterPro" id="IPR036071">
    <property type="entry name" value="AMMECR1_dom_sf"/>
</dbReference>
<dbReference type="InterPro" id="IPR002733">
    <property type="entry name" value="AMMECR1_domain"/>
</dbReference>
<dbReference type="InterPro" id="IPR027485">
    <property type="entry name" value="AMMECR1_N"/>
</dbReference>
<dbReference type="InterPro" id="IPR027623">
    <property type="entry name" value="AmmeMemoSam_A"/>
</dbReference>
<dbReference type="InterPro" id="IPR023472">
    <property type="entry name" value="Uncharacterised_MJ0810"/>
</dbReference>
<dbReference type="NCBIfam" id="TIGR04335">
    <property type="entry name" value="AmmeMemoSam_A"/>
    <property type="match status" value="1"/>
</dbReference>
<dbReference type="NCBIfam" id="TIGR00296">
    <property type="entry name" value="TIGR00296 family protein"/>
    <property type="match status" value="1"/>
</dbReference>
<dbReference type="PANTHER" id="PTHR13016:SF0">
    <property type="entry name" value="AMME SYNDROME CANDIDATE GENE 1 PROTEIN"/>
    <property type="match status" value="1"/>
</dbReference>
<dbReference type="PANTHER" id="PTHR13016">
    <property type="entry name" value="AMMECR1 HOMOLOG"/>
    <property type="match status" value="1"/>
</dbReference>
<dbReference type="Pfam" id="PF01871">
    <property type="entry name" value="AMMECR1"/>
    <property type="match status" value="1"/>
</dbReference>
<dbReference type="SUPFAM" id="SSF143447">
    <property type="entry name" value="AMMECR1-like"/>
    <property type="match status" value="1"/>
</dbReference>
<dbReference type="PROSITE" id="PS51112">
    <property type="entry name" value="AMMECR1"/>
    <property type="match status" value="1"/>
</dbReference>
<accession>Q980T4</accession>
<organism>
    <name type="scientific">Saccharolobus solfataricus (strain ATCC 35092 / DSM 1617 / JCM 11322 / P2)</name>
    <name type="common">Sulfolobus solfataricus</name>
    <dbReference type="NCBI Taxonomy" id="273057"/>
    <lineage>
        <taxon>Archaea</taxon>
        <taxon>Thermoproteota</taxon>
        <taxon>Thermoprotei</taxon>
        <taxon>Sulfolobales</taxon>
        <taxon>Sulfolobaceae</taxon>
        <taxon>Saccharolobus</taxon>
    </lineage>
</organism>
<reference key="1">
    <citation type="journal article" date="2001" name="Proc. Natl. Acad. Sci. U.S.A.">
        <title>The complete genome of the crenarchaeon Sulfolobus solfataricus P2.</title>
        <authorList>
            <person name="She Q."/>
            <person name="Singh R.K."/>
            <person name="Confalonieri F."/>
            <person name="Zivanovic Y."/>
            <person name="Allard G."/>
            <person name="Awayez M.J."/>
            <person name="Chan-Weiher C.C.-Y."/>
            <person name="Clausen I.G."/>
            <person name="Curtis B.A."/>
            <person name="De Moors A."/>
            <person name="Erauso G."/>
            <person name="Fletcher C."/>
            <person name="Gordon P.M.K."/>
            <person name="Heikamp-de Jong I."/>
            <person name="Jeffries A.C."/>
            <person name="Kozera C.J."/>
            <person name="Medina N."/>
            <person name="Peng X."/>
            <person name="Thi-Ngoc H.P."/>
            <person name="Redder P."/>
            <person name="Schenk M.E."/>
            <person name="Theriault C."/>
            <person name="Tolstrup N."/>
            <person name="Charlebois R.L."/>
            <person name="Doolittle W.F."/>
            <person name="Duguet M."/>
            <person name="Gaasterland T."/>
            <person name="Garrett R.A."/>
            <person name="Ragan M.A."/>
            <person name="Sensen C.W."/>
            <person name="Van der Oost J."/>
        </authorList>
    </citation>
    <scope>NUCLEOTIDE SEQUENCE [LARGE SCALE GENOMIC DNA]</scope>
    <source>
        <strain>ATCC 35092 / DSM 1617 / JCM 11322 / P2</strain>
    </source>
</reference>
<sequence>MIQEELVQIQELNEEIGRLLIEIARKSIKEEFKLDKLDLSKYDNPILDKKGLAFVTLEKIAYNTSSLRGCIGYVEAVAPLKQIAASAAKAAAFSDPRFNPLQEDELANIIIEVTVLTKPEEIKVKDRWDLPKIIKVGEDGLIVEKGILHSGLLLPQVPMEYCWDEETFLAETCIKASLEPDCWLDSSVRIKRFHGIIFKETKPNGSDIIVIKPSDIKCKLNELINNL</sequence>
<proteinExistence type="inferred from homology"/>
<name>Y193_SACS2</name>
<keyword id="KW-1185">Reference proteome</keyword>
<gene>
    <name type="ordered locus">SSO0193</name>
</gene>
<evidence type="ECO:0000255" key="1">
    <source>
        <dbReference type="HAMAP-Rule" id="MF_00645"/>
    </source>
</evidence>